<dbReference type="EMBL" id="Z49897">
    <property type="protein sequence ID" value="CAA90077.1"/>
    <property type="molecule type" value="Genomic_DNA"/>
</dbReference>
<dbReference type="PIR" id="S57438">
    <property type="entry name" value="S57438"/>
</dbReference>
<dbReference type="PDB" id="7OYC">
    <property type="method" value="EM"/>
    <property type="resolution" value="2.40 A"/>
    <property type="chains" value="N2=1-151"/>
</dbReference>
<dbReference type="PDBsum" id="7OYC"/>
<dbReference type="EMDB" id="EMD-13113"/>
<dbReference type="SMR" id="P49393"/>
<dbReference type="IntAct" id="P49393">
    <property type="interactions" value="1"/>
</dbReference>
<dbReference type="GeneID" id="108715318"/>
<dbReference type="KEGG" id="xla:108715318"/>
<dbReference type="AGR" id="Xenbase:XB-GENE-17340776"/>
<dbReference type="CTD" id="108715318"/>
<dbReference type="Xenbase" id="XB-GENE-17340776">
    <property type="gene designation" value="rps13.S"/>
</dbReference>
<dbReference type="OMA" id="MHTRRKG"/>
<dbReference type="OrthoDB" id="623277at2759"/>
<dbReference type="CD-CODE" id="78E86D56">
    <property type="entry name" value="Mitochondrial cloud"/>
</dbReference>
<dbReference type="Proteomes" id="UP000186698">
    <property type="component" value="Chromosome 4S"/>
</dbReference>
<dbReference type="Bgee" id="108715318">
    <property type="expression patterns" value="Expressed in oocyte and 19 other cell types or tissues"/>
</dbReference>
<dbReference type="GO" id="GO:0022627">
    <property type="term" value="C:cytosolic small ribosomal subunit"/>
    <property type="evidence" value="ECO:0000318"/>
    <property type="project" value="GO_Central"/>
</dbReference>
<dbReference type="GO" id="GO:0005730">
    <property type="term" value="C:nucleolus"/>
    <property type="evidence" value="ECO:0000318"/>
    <property type="project" value="GO_Central"/>
</dbReference>
<dbReference type="GO" id="GO:0070181">
    <property type="term" value="F:small ribosomal subunit rRNA binding"/>
    <property type="evidence" value="ECO:0000318"/>
    <property type="project" value="GO_Central"/>
</dbReference>
<dbReference type="GO" id="GO:0003735">
    <property type="term" value="F:structural constituent of ribosome"/>
    <property type="evidence" value="ECO:0000318"/>
    <property type="project" value="GO_Central"/>
</dbReference>
<dbReference type="GO" id="GO:0006412">
    <property type="term" value="P:translation"/>
    <property type="evidence" value="ECO:0007669"/>
    <property type="project" value="InterPro"/>
</dbReference>
<dbReference type="CDD" id="cd00353">
    <property type="entry name" value="Ribosomal_S15p_S13e"/>
    <property type="match status" value="1"/>
</dbReference>
<dbReference type="FunFam" id="1.10.287.10:FF:000003">
    <property type="entry name" value="40S ribosomal protein S13"/>
    <property type="match status" value="1"/>
</dbReference>
<dbReference type="FunFam" id="4.10.860.130:FF:000001">
    <property type="entry name" value="40S ribosomal protein S13"/>
    <property type="match status" value="1"/>
</dbReference>
<dbReference type="Gene3D" id="4.10.860.130">
    <property type="match status" value="1"/>
</dbReference>
<dbReference type="Gene3D" id="1.10.287.10">
    <property type="entry name" value="S15/NS1, RNA-binding"/>
    <property type="match status" value="1"/>
</dbReference>
<dbReference type="HAMAP" id="MF_01343_A">
    <property type="entry name" value="Ribosomal_uS15_A"/>
    <property type="match status" value="1"/>
</dbReference>
<dbReference type="InterPro" id="IPR000589">
    <property type="entry name" value="Ribosomal_uS15"/>
</dbReference>
<dbReference type="InterPro" id="IPR023029">
    <property type="entry name" value="Ribosomal_uS15_arc_euk"/>
</dbReference>
<dbReference type="InterPro" id="IPR012606">
    <property type="entry name" value="Ribosomal_uS15_N"/>
</dbReference>
<dbReference type="InterPro" id="IPR009068">
    <property type="entry name" value="uS15_NS1_RNA-bd_sf"/>
</dbReference>
<dbReference type="NCBIfam" id="NF006331">
    <property type="entry name" value="PRK08561.1"/>
    <property type="match status" value="1"/>
</dbReference>
<dbReference type="PANTHER" id="PTHR11885">
    <property type="entry name" value="RIBOSOMAL PROTEIN S15P/S13E"/>
    <property type="match status" value="1"/>
</dbReference>
<dbReference type="PANTHER" id="PTHR11885:SF6">
    <property type="entry name" value="SMALL RIBOSOMAL SUBUNIT PROTEIN US15"/>
    <property type="match status" value="1"/>
</dbReference>
<dbReference type="Pfam" id="PF08069">
    <property type="entry name" value="Ribosomal_S13_N"/>
    <property type="match status" value="1"/>
</dbReference>
<dbReference type="Pfam" id="PF00312">
    <property type="entry name" value="Ribosomal_S15"/>
    <property type="match status" value="1"/>
</dbReference>
<dbReference type="SMART" id="SM01386">
    <property type="entry name" value="Ribosomal_S13_N"/>
    <property type="match status" value="1"/>
</dbReference>
<dbReference type="SMART" id="SM01387">
    <property type="entry name" value="Ribosomal_S15"/>
    <property type="match status" value="1"/>
</dbReference>
<dbReference type="SUPFAM" id="SSF47060">
    <property type="entry name" value="S15/NS1 RNA-binding domain"/>
    <property type="match status" value="1"/>
</dbReference>
<dbReference type="PROSITE" id="PS00362">
    <property type="entry name" value="RIBOSOMAL_S15"/>
    <property type="match status" value="1"/>
</dbReference>
<keyword id="KW-0002">3D-structure</keyword>
<keyword id="KW-0963">Cytoplasm</keyword>
<keyword id="KW-1185">Reference proteome</keyword>
<keyword id="KW-0687">Ribonucleoprotein</keyword>
<keyword id="KW-0689">Ribosomal protein</keyword>
<sequence length="151" mass="17250">MGRMHAPGKGLSQSALPYRRSVPTWLKLTSDDVKEQIYKLAKKGLTPSQIGVILRDSHGVAQVRFVTGNKILRILKSKGLAPDLPEDLYHLIKKAVAVRKHLERNRKDKDAKFRLILIESRIHRLARYYKTRRVLPPNWKYESSTASALVA</sequence>
<comment type="function">
    <text evidence="2">Component of the small ribosomal subunit. The ribosome is a large ribonucleoprotein complex responsible for the synthesis of proteins in the cell.</text>
</comment>
<comment type="subunit">
    <text evidence="2">Component of the small ribosomal subunit.</text>
</comment>
<comment type="subcellular location">
    <subcellularLocation>
        <location evidence="2">Cytoplasm</location>
    </subcellularLocation>
</comment>
<comment type="similarity">
    <text evidence="3">Belongs to the universal ribosomal protein uS15 family.</text>
</comment>
<feature type="initiator methionine" description="Removed" evidence="1">
    <location>
        <position position="1"/>
    </location>
</feature>
<feature type="chain" id="PRO_0000115668" description="Small ribosomal subunit protein uS15">
    <location>
        <begin position="2"/>
        <end position="151"/>
    </location>
</feature>
<accession>P49393</accession>
<name>RS13_XENLA</name>
<reference key="1">
    <citation type="journal article" date="1995" name="Nucleic Acids Res.">
        <title>Intronic U14 snoRNAs of Xenopus laevis are located in two different parent genes and can be processed from their introns during early oogenesis.</title>
        <authorList>
            <person name="Xia L."/>
            <person name="Liu J."/>
            <person name="Sage C."/>
            <person name="Trexler E.B."/>
            <person name="Andrews M.T."/>
            <person name="Maxwell E.S."/>
        </authorList>
    </citation>
    <scope>NUCLEOTIDE SEQUENCE [GENOMIC DNA]</scope>
</reference>
<organism>
    <name type="scientific">Xenopus laevis</name>
    <name type="common">African clawed frog</name>
    <dbReference type="NCBI Taxonomy" id="8355"/>
    <lineage>
        <taxon>Eukaryota</taxon>
        <taxon>Metazoa</taxon>
        <taxon>Chordata</taxon>
        <taxon>Craniata</taxon>
        <taxon>Vertebrata</taxon>
        <taxon>Euteleostomi</taxon>
        <taxon>Amphibia</taxon>
        <taxon>Batrachia</taxon>
        <taxon>Anura</taxon>
        <taxon>Pipoidea</taxon>
        <taxon>Pipidae</taxon>
        <taxon>Xenopodinae</taxon>
        <taxon>Xenopus</taxon>
        <taxon>Xenopus</taxon>
    </lineage>
</organism>
<proteinExistence type="evidence at protein level"/>
<gene>
    <name type="primary">rps13</name>
</gene>
<protein>
    <recommendedName>
        <fullName evidence="3">Small ribosomal subunit protein uS15</fullName>
    </recommendedName>
    <alternativeName>
        <fullName>40S ribosomal protein S13</fullName>
    </alternativeName>
</protein>
<evidence type="ECO:0000250" key="1"/>
<evidence type="ECO:0000250" key="2">
    <source>
        <dbReference type="UniProtKB" id="P62277"/>
    </source>
</evidence>
<evidence type="ECO:0000305" key="3"/>